<feature type="initiator methionine" description="Removed">
    <location>
        <position position="1"/>
    </location>
</feature>
<feature type="chain" id="PRO_0000154178" description="Major pollen allergen Bet v 1-E">
    <location>
        <begin position="2"/>
        <end position="160"/>
    </location>
</feature>
<feature type="binding site" evidence="2">
    <location>
        <position position="55"/>
    </location>
    <ligand>
        <name>brassinolide</name>
        <dbReference type="ChEBI" id="CHEBI:28277"/>
    </ligand>
</feature>
<feature type="binding site" evidence="2">
    <location>
        <position position="82"/>
    </location>
    <ligand>
        <name>brassinolide</name>
        <dbReference type="ChEBI" id="CHEBI:28277"/>
    </ligand>
</feature>
<feature type="binding site" evidence="2">
    <location>
        <position position="84"/>
    </location>
    <ligand>
        <name>brassinolide</name>
        <dbReference type="ChEBI" id="CHEBI:28277"/>
    </ligand>
</feature>
<feature type="binding site" evidence="2">
    <location>
        <position position="101"/>
    </location>
    <ligand>
        <name>brassinolide</name>
        <dbReference type="ChEBI" id="CHEBI:28277"/>
    </ligand>
</feature>
<comment type="function">
    <text evidence="1">May be a general steroid carrier protein.</text>
</comment>
<comment type="subcellular location">
    <subcellularLocation>
        <location>Cytoplasm</location>
    </subcellularLocation>
</comment>
<comment type="allergen">
    <text>Causes an allergic reaction in human. Is a cause of type I allergic reactions in Europe, North America and USSR.</text>
</comment>
<comment type="similarity">
    <text evidence="3">Belongs to the BetVI family.</text>
</comment>
<proteinExistence type="evidence at protein level"/>
<keyword id="KW-0020">Allergen</keyword>
<keyword id="KW-0963">Cytoplasm</keyword>
<keyword id="KW-0903">Direct protein sequencing</keyword>
<keyword id="KW-0568">Pathogenesis-related protein</keyword>
<keyword id="KW-0611">Plant defense</keyword>
<dbReference type="EMBL" id="X77267">
    <property type="protein sequence ID" value="CAA54483.1"/>
    <property type="molecule type" value="mRNA"/>
</dbReference>
<dbReference type="PIR" id="D55699">
    <property type="entry name" value="D55699"/>
</dbReference>
<dbReference type="SMR" id="P43178"/>
<dbReference type="Allergome" id="89">
    <property type="allergen name" value="Bet v 1"/>
</dbReference>
<dbReference type="Allergome" id="97">
    <property type="allergen name" value="Bet v 1.0103"/>
</dbReference>
<dbReference type="GO" id="GO:0005737">
    <property type="term" value="C:cytoplasm"/>
    <property type="evidence" value="ECO:0007669"/>
    <property type="project" value="UniProtKB-SubCell"/>
</dbReference>
<dbReference type="GO" id="GO:0005634">
    <property type="term" value="C:nucleus"/>
    <property type="evidence" value="ECO:0007669"/>
    <property type="project" value="TreeGrafter"/>
</dbReference>
<dbReference type="GO" id="GO:0010427">
    <property type="term" value="F:abscisic acid binding"/>
    <property type="evidence" value="ECO:0007669"/>
    <property type="project" value="InterPro"/>
</dbReference>
<dbReference type="GO" id="GO:0004864">
    <property type="term" value="F:protein phosphatase inhibitor activity"/>
    <property type="evidence" value="ECO:0007669"/>
    <property type="project" value="InterPro"/>
</dbReference>
<dbReference type="GO" id="GO:0038023">
    <property type="term" value="F:signaling receptor activity"/>
    <property type="evidence" value="ECO:0007669"/>
    <property type="project" value="InterPro"/>
</dbReference>
<dbReference type="GO" id="GO:0009738">
    <property type="term" value="P:abscisic acid-activated signaling pathway"/>
    <property type="evidence" value="ECO:0007669"/>
    <property type="project" value="InterPro"/>
</dbReference>
<dbReference type="GO" id="GO:0006952">
    <property type="term" value="P:defense response"/>
    <property type="evidence" value="ECO:0007669"/>
    <property type="project" value="UniProtKB-KW"/>
</dbReference>
<dbReference type="CDD" id="cd07816">
    <property type="entry name" value="Bet_v1-like"/>
    <property type="match status" value="1"/>
</dbReference>
<dbReference type="FunFam" id="3.30.530.20:FF:000007">
    <property type="entry name" value="Major pollen allergen Bet v 1-A"/>
    <property type="match status" value="1"/>
</dbReference>
<dbReference type="Gene3D" id="3.30.530.20">
    <property type="match status" value="1"/>
</dbReference>
<dbReference type="InterPro" id="IPR000916">
    <property type="entry name" value="Bet_v_I/MLP"/>
</dbReference>
<dbReference type="InterPro" id="IPR024949">
    <property type="entry name" value="Bet_v_I_allergen"/>
</dbReference>
<dbReference type="InterPro" id="IPR050279">
    <property type="entry name" value="Plant_def-hormone_signal"/>
</dbReference>
<dbReference type="InterPro" id="IPR023393">
    <property type="entry name" value="START-like_dom_sf"/>
</dbReference>
<dbReference type="PANTHER" id="PTHR31213">
    <property type="entry name" value="OS08G0374000 PROTEIN-RELATED"/>
    <property type="match status" value="1"/>
</dbReference>
<dbReference type="PANTHER" id="PTHR31213:SF55">
    <property type="entry name" value="STRESS-INDUCED PROTEIN SAM22"/>
    <property type="match status" value="1"/>
</dbReference>
<dbReference type="Pfam" id="PF00407">
    <property type="entry name" value="Bet_v_1"/>
    <property type="match status" value="1"/>
</dbReference>
<dbReference type="PRINTS" id="PR00634">
    <property type="entry name" value="BETALLERGEN"/>
</dbReference>
<dbReference type="SMART" id="SM01037">
    <property type="entry name" value="Bet_v_1"/>
    <property type="match status" value="1"/>
</dbReference>
<dbReference type="SUPFAM" id="SSF55961">
    <property type="entry name" value="Bet v1-like"/>
    <property type="match status" value="1"/>
</dbReference>
<dbReference type="PROSITE" id="PS00451">
    <property type="entry name" value="PATHOGENESIS_BETVI"/>
    <property type="match status" value="1"/>
</dbReference>
<accession>P43178</accession>
<gene>
    <name type="primary">BETV1E</name>
</gene>
<sequence length="160" mass="17448">MGVFNYETEATSVIPAARLFKAFILDGDNLFPKVAPQAISSVENIEGNGGPGTIKKISFPEGIPFKYVKGRVDEVDHTNFKYSYSVIEGGPVGDTLEKISNEIKIVATPNGGSILKINNKYHTKGDHEVKAEQIKASKEMGETLLRAVESYLLAHSDAYN</sequence>
<protein>
    <recommendedName>
        <fullName>Major pollen allergen Bet v 1-E</fullName>
    </recommendedName>
    <alternativeName>
        <fullName>Allergen Bet v I-E</fullName>
    </alternativeName>
    <allergenName>Bet v 1-E</allergenName>
</protein>
<organism>
    <name type="scientific">Betula pendula</name>
    <name type="common">European white birch</name>
    <name type="synonym">Betula verrucosa</name>
    <dbReference type="NCBI Taxonomy" id="3505"/>
    <lineage>
        <taxon>Eukaryota</taxon>
        <taxon>Viridiplantae</taxon>
        <taxon>Streptophyta</taxon>
        <taxon>Embryophyta</taxon>
        <taxon>Tracheophyta</taxon>
        <taxon>Spermatophyta</taxon>
        <taxon>Magnoliopsida</taxon>
        <taxon>eudicotyledons</taxon>
        <taxon>Gunneridae</taxon>
        <taxon>Pentapetalae</taxon>
        <taxon>rosids</taxon>
        <taxon>fabids</taxon>
        <taxon>Fagales</taxon>
        <taxon>Betulaceae</taxon>
        <taxon>Betula</taxon>
    </lineage>
</organism>
<evidence type="ECO:0000250" key="1"/>
<evidence type="ECO:0000250" key="2">
    <source>
        <dbReference type="UniProtKB" id="P43185"/>
    </source>
</evidence>
<evidence type="ECO:0000305" key="3"/>
<name>BEV1E_BETPN</name>
<reference key="1">
    <citation type="journal article" date="1995" name="J. Biol. Chem.">
        <title>Isoforms of Bet v 1, the major birch pollen allergen, analyzed by liquid chromatography, mass spectrometry, and cDNA cloning.</title>
        <authorList>
            <person name="Swoboda I."/>
            <person name="Jilek A."/>
            <person name="Ferreira F."/>
            <person name="Engel E."/>
            <person name="Hoffman-Sommergruber K."/>
            <person name="Scheiner O."/>
            <person name="Kraft D."/>
            <person name="Breiteneder H."/>
            <person name="Pittenauer E."/>
            <person name="Schmid E."/>
            <person name="Vicente O."/>
            <person name="Heberle-Bors E."/>
            <person name="Ahorn H."/>
            <person name="Breitenbach M."/>
        </authorList>
    </citation>
    <scope>NUCLEOTIDE SEQUENCE [MRNA]</scope>
    <scope>PARTIAL PROTEIN SEQUENCE</scope>
    <source>
        <tissue>Pollen</tissue>
    </source>
</reference>